<comment type="function">
    <text evidence="1">Ribonucleoside-diphosphate reductase holoenzyme provides the precursors necessary for viral DNA synthesis. Allows virus growth in non-dividing cells, as well as reactivation from latency in infected hosts. Catalyzes the biosynthesis of deoxyribonucleotides from the corresponding ribonucleotides.</text>
</comment>
<comment type="catalytic activity">
    <reaction evidence="1">
        <text>a 2'-deoxyribonucleoside 5'-diphosphate + [thioredoxin]-disulfide + H2O = a ribonucleoside 5'-diphosphate + [thioredoxin]-dithiol</text>
        <dbReference type="Rhea" id="RHEA:23252"/>
        <dbReference type="Rhea" id="RHEA-COMP:10698"/>
        <dbReference type="Rhea" id="RHEA-COMP:10700"/>
        <dbReference type="ChEBI" id="CHEBI:15377"/>
        <dbReference type="ChEBI" id="CHEBI:29950"/>
        <dbReference type="ChEBI" id="CHEBI:50058"/>
        <dbReference type="ChEBI" id="CHEBI:57930"/>
        <dbReference type="ChEBI" id="CHEBI:73316"/>
        <dbReference type="EC" id="1.17.4.1"/>
    </reaction>
</comment>
<comment type="cofactor">
    <cofactor evidence="1">
        <name>Fe cation</name>
        <dbReference type="ChEBI" id="CHEBI:24875"/>
    </cofactor>
</comment>
<comment type="subunit">
    <text evidence="1">Heterotetramer composed of a homodimer of the large subunit (R1) and a homodimer of the small subunit (R2). Larger multisubunit protein complex are also active, composed of (R1)n(R2)n.</text>
</comment>
<comment type="subcellular location">
    <subcellularLocation>
        <location evidence="1">Host membrane</location>
        <topology evidence="1">Single-pass membrane protein</topology>
    </subcellularLocation>
</comment>
<comment type="similarity">
    <text evidence="1">Belongs to the ribonucleoside diphosphate reductase small chain family.</text>
</comment>
<sequence>MDFIKKYLYVCDHPGFFELTQETFQNRWFPAQINLSVDVKCLSLMSEADVNFYKYLFTFLGMAETLVNFNIDELLVDFECHDIKHYYCEQMAMECVHGKVYFNILNMLFKNNLAATWEFAEAVLKDEALQKKLEWLESKIKMAKTKAEKVLIFYLIEGVFFISSFYCIGLLRVKGVMPGVCMANDYISRDELLHTRAAALLYNTMIPKEERPSSEWVVSLFKEAVEIECAFIEAKTKQVTFVSMDDIRAFLEATADRLLNSIELPRYYKSDPPQSCPLTYTGCIKNVSFFERESTEYSSFIINDL</sequence>
<proteinExistence type="inferred from homology"/>
<reference key="1">
    <citation type="journal article" date="1997" name="J. Virol.">
        <title>Primary structure of the alcelaphine herpesvirus 1 genome.</title>
        <authorList>
            <person name="Ensser A."/>
            <person name="Pflanz R."/>
            <person name="Fleckenstein B."/>
        </authorList>
    </citation>
    <scope>NUCLEOTIDE SEQUENCE [LARGE SCALE GENOMIC DNA]</scope>
</reference>
<gene>
    <name evidence="1" type="primary">RIR2</name>
    <name type="synonym">60</name>
</gene>
<accession>O36410</accession>
<protein>
    <recommendedName>
        <fullName evidence="1">Ribonucleoside-diphosphate reductase small subunit</fullName>
        <ecNumber evidence="1">1.17.4.1</ecNumber>
    </recommendedName>
    <alternativeName>
        <fullName evidence="1">Ribonucleotide reductase small subunit</fullName>
    </alternativeName>
</protein>
<feature type="chain" id="PRO_0000405697" description="Ribonucleoside-diphosphate reductase small subunit">
    <location>
        <begin position="1"/>
        <end position="305"/>
    </location>
</feature>
<feature type="transmembrane region" description="Helical" evidence="1">
    <location>
        <begin position="150"/>
        <end position="170"/>
    </location>
</feature>
<feature type="active site" evidence="1">
    <location>
        <position position="101"/>
    </location>
</feature>
<feature type="binding site" evidence="1">
    <location>
        <position position="64"/>
    </location>
    <ligand>
        <name>Fe cation</name>
        <dbReference type="ChEBI" id="CHEBI:24875"/>
        <label>1</label>
    </ligand>
</feature>
<feature type="binding site" evidence="1">
    <location>
        <position position="94"/>
    </location>
    <ligand>
        <name>Fe cation</name>
        <dbReference type="ChEBI" id="CHEBI:24875"/>
        <label>1</label>
    </ligand>
</feature>
<feature type="binding site" evidence="1">
    <location>
        <position position="94"/>
    </location>
    <ligand>
        <name>Fe cation</name>
        <dbReference type="ChEBI" id="CHEBI:24875"/>
        <label>2</label>
    </ligand>
</feature>
<feature type="binding site" evidence="1">
    <location>
        <position position="97"/>
    </location>
    <ligand>
        <name>Fe cation</name>
        <dbReference type="ChEBI" id="CHEBI:24875"/>
        <label>1</label>
    </ligand>
</feature>
<feature type="binding site" evidence="1">
    <location>
        <position position="157"/>
    </location>
    <ligand>
        <name>Fe cation</name>
        <dbReference type="ChEBI" id="CHEBI:24875"/>
        <label>2</label>
    </ligand>
</feature>
<feature type="binding site" evidence="1">
    <location>
        <position position="191"/>
    </location>
    <ligand>
        <name>Fe cation</name>
        <dbReference type="ChEBI" id="CHEBI:24875"/>
        <label>2</label>
    </ligand>
</feature>
<feature type="binding site" evidence="1">
    <location>
        <position position="194"/>
    </location>
    <ligand>
        <name>Fe cation</name>
        <dbReference type="ChEBI" id="CHEBI:24875"/>
        <label>2</label>
    </ligand>
</feature>
<name>RIR2_ALHV1</name>
<evidence type="ECO:0000255" key="1">
    <source>
        <dbReference type="HAMAP-Rule" id="MF_04028"/>
    </source>
</evidence>
<dbReference type="EC" id="1.17.4.1" evidence="1"/>
<dbReference type="EMBL" id="AF005370">
    <property type="protein sequence ID" value="AAC58107.1"/>
    <property type="molecule type" value="Genomic_DNA"/>
</dbReference>
<dbReference type="PIR" id="T03155">
    <property type="entry name" value="T03155"/>
</dbReference>
<dbReference type="RefSeq" id="NP_065559.1">
    <property type="nucleotide sequence ID" value="NC_002531.1"/>
</dbReference>
<dbReference type="SMR" id="O36410"/>
<dbReference type="KEGG" id="vg:911784"/>
<dbReference type="Proteomes" id="UP000000941">
    <property type="component" value="Segment"/>
</dbReference>
<dbReference type="GO" id="GO:0033644">
    <property type="term" value="C:host cell membrane"/>
    <property type="evidence" value="ECO:0007669"/>
    <property type="project" value="UniProtKB-SubCell"/>
</dbReference>
<dbReference type="GO" id="GO:0016020">
    <property type="term" value="C:membrane"/>
    <property type="evidence" value="ECO:0007669"/>
    <property type="project" value="UniProtKB-KW"/>
</dbReference>
<dbReference type="GO" id="GO:0046872">
    <property type="term" value="F:metal ion binding"/>
    <property type="evidence" value="ECO:0007669"/>
    <property type="project" value="UniProtKB-KW"/>
</dbReference>
<dbReference type="GO" id="GO:0004748">
    <property type="term" value="F:ribonucleoside-diphosphate reductase activity, thioredoxin disulfide as acceptor"/>
    <property type="evidence" value="ECO:0007669"/>
    <property type="project" value="UniProtKB-EC"/>
</dbReference>
<dbReference type="GO" id="GO:0009263">
    <property type="term" value="P:deoxyribonucleotide biosynthetic process"/>
    <property type="evidence" value="ECO:0007669"/>
    <property type="project" value="InterPro"/>
</dbReference>
<dbReference type="GO" id="GO:0006260">
    <property type="term" value="P:DNA replication"/>
    <property type="evidence" value="ECO:0007669"/>
    <property type="project" value="UniProtKB-KW"/>
</dbReference>
<dbReference type="GO" id="GO:0019046">
    <property type="term" value="P:release from viral latency"/>
    <property type="evidence" value="ECO:0007669"/>
    <property type="project" value="UniProtKB-KW"/>
</dbReference>
<dbReference type="CDD" id="cd01049">
    <property type="entry name" value="RNRR2"/>
    <property type="match status" value="1"/>
</dbReference>
<dbReference type="Gene3D" id="1.10.620.20">
    <property type="entry name" value="Ribonucleotide Reductase, subunit A"/>
    <property type="match status" value="1"/>
</dbReference>
<dbReference type="HAMAP" id="MF_04028">
    <property type="entry name" value="HSV_RIR2"/>
    <property type="match status" value="1"/>
</dbReference>
<dbReference type="InterPro" id="IPR009078">
    <property type="entry name" value="Ferritin-like_SF"/>
</dbReference>
<dbReference type="InterPro" id="IPR034715">
    <property type="entry name" value="HSV_RIR2"/>
</dbReference>
<dbReference type="InterPro" id="IPR012348">
    <property type="entry name" value="RNR-like"/>
</dbReference>
<dbReference type="InterPro" id="IPR033909">
    <property type="entry name" value="RNR_small"/>
</dbReference>
<dbReference type="InterPro" id="IPR030475">
    <property type="entry name" value="RNR_small_AS"/>
</dbReference>
<dbReference type="InterPro" id="IPR000358">
    <property type="entry name" value="RNR_small_fam"/>
</dbReference>
<dbReference type="PANTHER" id="PTHR23409">
    <property type="entry name" value="RIBONUCLEOSIDE-DIPHOSPHATE REDUCTASE SMALL CHAIN"/>
    <property type="match status" value="1"/>
</dbReference>
<dbReference type="PANTHER" id="PTHR23409:SF18">
    <property type="entry name" value="RIBONUCLEOSIDE-DIPHOSPHATE REDUCTASE SUBUNIT M2"/>
    <property type="match status" value="1"/>
</dbReference>
<dbReference type="Pfam" id="PF00268">
    <property type="entry name" value="Ribonuc_red_sm"/>
    <property type="match status" value="1"/>
</dbReference>
<dbReference type="SUPFAM" id="SSF47240">
    <property type="entry name" value="Ferritin-like"/>
    <property type="match status" value="1"/>
</dbReference>
<dbReference type="PROSITE" id="PS00368">
    <property type="entry name" value="RIBORED_SMALL"/>
    <property type="match status" value="1"/>
</dbReference>
<keyword id="KW-0235">DNA replication</keyword>
<keyword id="KW-1043">Host membrane</keyword>
<keyword id="KW-0408">Iron</keyword>
<keyword id="KW-0472">Membrane</keyword>
<keyword id="KW-0479">Metal-binding</keyword>
<keyword id="KW-0560">Oxidoreductase</keyword>
<keyword id="KW-1185">Reference proteome</keyword>
<keyword id="KW-0812">Transmembrane</keyword>
<keyword id="KW-1133">Transmembrane helix</keyword>
<keyword id="KW-1251">Viral latency</keyword>
<keyword id="KW-1272">Viral reactivation from latency</keyword>
<organism>
    <name type="scientific">Alcelaphine herpesvirus 1 (strain C500)</name>
    <name type="common">AlHV-1</name>
    <name type="synonym">Malignant catarrhal fever virus</name>
    <dbReference type="NCBI Taxonomy" id="654901"/>
    <lineage>
        <taxon>Viruses</taxon>
        <taxon>Duplodnaviria</taxon>
        <taxon>Heunggongvirae</taxon>
        <taxon>Peploviricota</taxon>
        <taxon>Herviviricetes</taxon>
        <taxon>Herpesvirales</taxon>
        <taxon>Orthoherpesviridae</taxon>
        <taxon>Gammaherpesvirinae</taxon>
        <taxon>Macavirus</taxon>
        <taxon>Macavirus alcelaphinegamma1</taxon>
    </lineage>
</organism>
<organismHost>
    <name type="scientific">Connochaetes taurinus</name>
    <name type="common">Blue wildebeest</name>
    <dbReference type="NCBI Taxonomy" id="9927"/>
</organismHost>